<dbReference type="EC" id="5.3.1.9" evidence="1"/>
<dbReference type="EMBL" id="CP001111">
    <property type="protein sequence ID" value="ACF51226.1"/>
    <property type="molecule type" value="Genomic_DNA"/>
</dbReference>
<dbReference type="RefSeq" id="WP_012510701.1">
    <property type="nucleotide sequence ID" value="NC_011071.1"/>
</dbReference>
<dbReference type="SMR" id="B4SRY7"/>
<dbReference type="STRING" id="391008.Smal_1521"/>
<dbReference type="KEGG" id="smt:Smal_1521"/>
<dbReference type="eggNOG" id="COG0166">
    <property type="taxonomic scope" value="Bacteria"/>
</dbReference>
<dbReference type="HOGENOM" id="CLU_017947_3_1_6"/>
<dbReference type="OrthoDB" id="140919at2"/>
<dbReference type="UniPathway" id="UPA00109">
    <property type="reaction ID" value="UER00181"/>
</dbReference>
<dbReference type="UniPathway" id="UPA00138"/>
<dbReference type="Proteomes" id="UP000001867">
    <property type="component" value="Chromosome"/>
</dbReference>
<dbReference type="GO" id="GO:0005829">
    <property type="term" value="C:cytosol"/>
    <property type="evidence" value="ECO:0007669"/>
    <property type="project" value="TreeGrafter"/>
</dbReference>
<dbReference type="GO" id="GO:0097367">
    <property type="term" value="F:carbohydrate derivative binding"/>
    <property type="evidence" value="ECO:0007669"/>
    <property type="project" value="InterPro"/>
</dbReference>
<dbReference type="GO" id="GO:0004347">
    <property type="term" value="F:glucose-6-phosphate isomerase activity"/>
    <property type="evidence" value="ECO:0007669"/>
    <property type="project" value="UniProtKB-UniRule"/>
</dbReference>
<dbReference type="GO" id="GO:0048029">
    <property type="term" value="F:monosaccharide binding"/>
    <property type="evidence" value="ECO:0007669"/>
    <property type="project" value="TreeGrafter"/>
</dbReference>
<dbReference type="GO" id="GO:0006094">
    <property type="term" value="P:gluconeogenesis"/>
    <property type="evidence" value="ECO:0007669"/>
    <property type="project" value="UniProtKB-UniRule"/>
</dbReference>
<dbReference type="GO" id="GO:0051156">
    <property type="term" value="P:glucose 6-phosphate metabolic process"/>
    <property type="evidence" value="ECO:0007669"/>
    <property type="project" value="TreeGrafter"/>
</dbReference>
<dbReference type="GO" id="GO:0006096">
    <property type="term" value="P:glycolytic process"/>
    <property type="evidence" value="ECO:0007669"/>
    <property type="project" value="UniProtKB-UniRule"/>
</dbReference>
<dbReference type="CDD" id="cd05015">
    <property type="entry name" value="SIS_PGI_1"/>
    <property type="match status" value="1"/>
</dbReference>
<dbReference type="CDD" id="cd05016">
    <property type="entry name" value="SIS_PGI_2"/>
    <property type="match status" value="1"/>
</dbReference>
<dbReference type="Gene3D" id="1.10.1390.10">
    <property type="match status" value="1"/>
</dbReference>
<dbReference type="Gene3D" id="3.40.50.10490">
    <property type="entry name" value="Glucose-6-phosphate isomerase like protein, domain 1"/>
    <property type="match status" value="2"/>
</dbReference>
<dbReference type="HAMAP" id="MF_00473">
    <property type="entry name" value="G6P_isomerase"/>
    <property type="match status" value="1"/>
</dbReference>
<dbReference type="InterPro" id="IPR001672">
    <property type="entry name" value="G6P_Isomerase"/>
</dbReference>
<dbReference type="InterPro" id="IPR023096">
    <property type="entry name" value="G6P_Isomerase_C"/>
</dbReference>
<dbReference type="InterPro" id="IPR018189">
    <property type="entry name" value="Phosphoglucose_isomerase_CS"/>
</dbReference>
<dbReference type="InterPro" id="IPR046348">
    <property type="entry name" value="SIS_dom_sf"/>
</dbReference>
<dbReference type="InterPro" id="IPR035476">
    <property type="entry name" value="SIS_PGI_1"/>
</dbReference>
<dbReference type="InterPro" id="IPR035482">
    <property type="entry name" value="SIS_PGI_2"/>
</dbReference>
<dbReference type="NCBIfam" id="NF001211">
    <property type="entry name" value="PRK00179.1"/>
    <property type="match status" value="1"/>
</dbReference>
<dbReference type="PANTHER" id="PTHR11469">
    <property type="entry name" value="GLUCOSE-6-PHOSPHATE ISOMERASE"/>
    <property type="match status" value="1"/>
</dbReference>
<dbReference type="PANTHER" id="PTHR11469:SF1">
    <property type="entry name" value="GLUCOSE-6-PHOSPHATE ISOMERASE"/>
    <property type="match status" value="1"/>
</dbReference>
<dbReference type="Pfam" id="PF00342">
    <property type="entry name" value="PGI"/>
    <property type="match status" value="1"/>
</dbReference>
<dbReference type="PRINTS" id="PR00662">
    <property type="entry name" value="G6PISOMERASE"/>
</dbReference>
<dbReference type="SUPFAM" id="SSF53697">
    <property type="entry name" value="SIS domain"/>
    <property type="match status" value="1"/>
</dbReference>
<dbReference type="PROSITE" id="PS00765">
    <property type="entry name" value="P_GLUCOSE_ISOMERASE_1"/>
    <property type="match status" value="1"/>
</dbReference>
<dbReference type="PROSITE" id="PS00174">
    <property type="entry name" value="P_GLUCOSE_ISOMERASE_2"/>
    <property type="match status" value="1"/>
</dbReference>
<dbReference type="PROSITE" id="PS51463">
    <property type="entry name" value="P_GLUCOSE_ISOMERASE_3"/>
    <property type="match status" value="1"/>
</dbReference>
<comment type="function">
    <text evidence="1">Catalyzes the reversible isomerization of glucose-6-phosphate to fructose-6-phosphate.</text>
</comment>
<comment type="catalytic activity">
    <reaction evidence="1">
        <text>alpha-D-glucose 6-phosphate = beta-D-fructose 6-phosphate</text>
        <dbReference type="Rhea" id="RHEA:11816"/>
        <dbReference type="ChEBI" id="CHEBI:57634"/>
        <dbReference type="ChEBI" id="CHEBI:58225"/>
        <dbReference type="EC" id="5.3.1.9"/>
    </reaction>
</comment>
<comment type="pathway">
    <text evidence="1">Carbohydrate biosynthesis; gluconeogenesis.</text>
</comment>
<comment type="pathway">
    <text evidence="1">Carbohydrate degradation; glycolysis; D-glyceraldehyde 3-phosphate and glycerone phosphate from D-glucose: step 2/4.</text>
</comment>
<comment type="subcellular location">
    <subcellularLocation>
        <location evidence="1">Cytoplasm</location>
    </subcellularLocation>
</comment>
<comment type="similarity">
    <text evidence="1">Belongs to the GPI family.</text>
</comment>
<keyword id="KW-0963">Cytoplasm</keyword>
<keyword id="KW-0312">Gluconeogenesis</keyword>
<keyword id="KW-0324">Glycolysis</keyword>
<keyword id="KW-0413">Isomerase</keyword>
<name>G6PI_STRM5</name>
<protein>
    <recommendedName>
        <fullName evidence="1">Glucose-6-phosphate isomerase</fullName>
        <shortName evidence="1">GPI</shortName>
        <ecNumber evidence="1">5.3.1.9</ecNumber>
    </recommendedName>
    <alternativeName>
        <fullName evidence="1">Phosphoglucose isomerase</fullName>
        <shortName evidence="1">PGI</shortName>
    </alternativeName>
    <alternativeName>
        <fullName evidence="1">Phosphohexose isomerase</fullName>
        <shortName evidence="1">PHI</shortName>
    </alternativeName>
</protein>
<organism>
    <name type="scientific">Stenotrophomonas maltophilia (strain R551-3)</name>
    <dbReference type="NCBI Taxonomy" id="391008"/>
    <lineage>
        <taxon>Bacteria</taxon>
        <taxon>Pseudomonadati</taxon>
        <taxon>Pseudomonadota</taxon>
        <taxon>Gammaproteobacteria</taxon>
        <taxon>Lysobacterales</taxon>
        <taxon>Lysobacteraceae</taxon>
        <taxon>Stenotrophomonas</taxon>
        <taxon>Stenotrophomonas maltophilia group</taxon>
    </lineage>
</organism>
<reference key="1">
    <citation type="submission" date="2008-06" db="EMBL/GenBank/DDBJ databases">
        <title>Complete sequence of Stenotrophomonas maltophilia R551-3.</title>
        <authorList>
            <consortium name="US DOE Joint Genome Institute"/>
            <person name="Lucas S."/>
            <person name="Copeland A."/>
            <person name="Lapidus A."/>
            <person name="Glavina del Rio T."/>
            <person name="Dalin E."/>
            <person name="Tice H."/>
            <person name="Pitluck S."/>
            <person name="Chain P."/>
            <person name="Malfatti S."/>
            <person name="Shin M."/>
            <person name="Vergez L."/>
            <person name="Lang D."/>
            <person name="Schmutz J."/>
            <person name="Larimer F."/>
            <person name="Land M."/>
            <person name="Hauser L."/>
            <person name="Kyrpides N."/>
            <person name="Mikhailova N."/>
            <person name="Taghavi S."/>
            <person name="Monchy S."/>
            <person name="Newman L."/>
            <person name="Vangronsveld J."/>
            <person name="van der Lelie D."/>
            <person name="Richardson P."/>
        </authorList>
    </citation>
    <scope>NUCLEOTIDE SEQUENCE [LARGE SCALE GENOMIC DNA]</scope>
    <source>
        <strain>R551-3</strain>
    </source>
</reference>
<sequence>MTTNNGFDSLHSHAQRLKGASIPSLLAAEPGRVQELALRVGPLYVSFARQTYDAAALQALLALAAERDVGAAITRLFRGEQVNLTEGRAALHTALRGDVVDAPVAAEAYATARDIRQRMGVLVRALEDSGVTDVVSVGIGGSDLGPRLVADALRPVTGARLRVHFVSNVDGAAMQRTLATLDPAKTAGILISKTFGTQETLLNGQILHDWLGGSERLYAVSANPERAAKAFAIAADRVLPMWDWVGGRYSLWSAVGFPIALAIGFERFEQLLEGAAQMDAHALDAPLERNLPVLHGLTDIWNRNLLGYATHAVMTYDQRLALLPAYLQQLVMESLGKRVQRDGQPVTTDTVPVWWGGAGTDVQHSFFQALHQGTSIIPADFIGCVHNDDPYTINHQALLANLLAQTEALANGQGSDDPHRDYPGGRPSTLILLDALTPQALGALIAMYEHAVYVQSVIWNINAFDQFGVELGKQLASGLLPALQGEDVAVADLMTREILAQLKR</sequence>
<feature type="chain" id="PRO_1000125763" description="Glucose-6-phosphate isomerase">
    <location>
        <begin position="1"/>
        <end position="504"/>
    </location>
</feature>
<feature type="active site" description="Proton donor" evidence="1">
    <location>
        <position position="333"/>
    </location>
</feature>
<feature type="active site" evidence="1">
    <location>
        <position position="364"/>
    </location>
</feature>
<feature type="active site" evidence="1">
    <location>
        <position position="473"/>
    </location>
</feature>
<accession>B4SRY7</accession>
<evidence type="ECO:0000255" key="1">
    <source>
        <dbReference type="HAMAP-Rule" id="MF_00473"/>
    </source>
</evidence>
<proteinExistence type="inferred from homology"/>
<gene>
    <name evidence="1" type="primary">pgi</name>
    <name type="ordered locus">Smal_1521</name>
</gene>